<feature type="chain" id="PRO_0000282585" description="Probable imidazolonepropionase">
    <location>
        <begin position="1"/>
        <end position="438"/>
    </location>
</feature>
<feature type="binding site" evidence="3">
    <location>
        <position position="159"/>
    </location>
    <ligand>
        <name>4-imidazolone-5-propanoate</name>
        <dbReference type="ChEBI" id="CHEBI:77893"/>
    </ligand>
</feature>
<feature type="binding site" evidence="4">
    <location>
        <position position="159"/>
    </location>
    <ligand>
        <name>N-formimidoyl-L-glutamate</name>
        <dbReference type="ChEBI" id="CHEBI:58928"/>
    </ligand>
</feature>
<feature type="binding site" evidence="3">
    <location>
        <position position="192"/>
    </location>
    <ligand>
        <name>4-imidazolone-5-propanoate</name>
        <dbReference type="ChEBI" id="CHEBI:77893"/>
    </ligand>
</feature>
<feature type="binding site" evidence="2">
    <location>
        <position position="260"/>
    </location>
    <ligand>
        <name>Fe(3+)</name>
        <dbReference type="ChEBI" id="CHEBI:29034"/>
    </ligand>
</feature>
<feature type="binding site" evidence="3">
    <location>
        <position position="260"/>
    </location>
    <ligand>
        <name>Zn(2+)</name>
        <dbReference type="ChEBI" id="CHEBI:29105"/>
    </ligand>
</feature>
<feature type="binding site" evidence="3">
    <location>
        <position position="263"/>
    </location>
    <ligand>
        <name>4-imidazolone-5-propanoate</name>
        <dbReference type="ChEBI" id="CHEBI:77893"/>
    </ligand>
</feature>
<feature type="binding site" evidence="2">
    <location>
        <position position="334"/>
    </location>
    <ligand>
        <name>Fe(3+)</name>
        <dbReference type="ChEBI" id="CHEBI:29034"/>
    </ligand>
</feature>
<feature type="binding site" evidence="3">
    <location>
        <position position="334"/>
    </location>
    <ligand>
        <name>Zn(2+)</name>
        <dbReference type="ChEBI" id="CHEBI:29105"/>
    </ligand>
</feature>
<feature type="binding site" evidence="4">
    <location>
        <position position="336"/>
    </location>
    <ligand>
        <name>N-formimidoyl-L-glutamate</name>
        <dbReference type="ChEBI" id="CHEBI:58928"/>
    </ligand>
</feature>
<organism>
    <name type="scientific">Xenopus laevis</name>
    <name type="common">African clawed frog</name>
    <dbReference type="NCBI Taxonomy" id="8355"/>
    <lineage>
        <taxon>Eukaryota</taxon>
        <taxon>Metazoa</taxon>
        <taxon>Chordata</taxon>
        <taxon>Craniata</taxon>
        <taxon>Vertebrata</taxon>
        <taxon>Euteleostomi</taxon>
        <taxon>Amphibia</taxon>
        <taxon>Batrachia</taxon>
        <taxon>Anura</taxon>
        <taxon>Pipoidea</taxon>
        <taxon>Pipidae</taxon>
        <taxon>Xenopodinae</taxon>
        <taxon>Xenopus</taxon>
        <taxon>Xenopus</taxon>
    </lineage>
</organism>
<protein>
    <recommendedName>
        <fullName>Probable imidazolonepropionase</fullName>
        <ecNumber>3.5.2.7</ecNumber>
    </recommendedName>
    <alternativeName>
        <fullName>Amidohydrolase domain-containing protein 1</fullName>
    </alternativeName>
</protein>
<keyword id="KW-0369">Histidine metabolism</keyword>
<keyword id="KW-0378">Hydrolase</keyword>
<keyword id="KW-0408">Iron</keyword>
<keyword id="KW-0479">Metal-binding</keyword>
<keyword id="KW-1185">Reference proteome</keyword>
<keyword id="KW-0862">Zinc</keyword>
<dbReference type="EC" id="3.5.2.7"/>
<dbReference type="EMBL" id="BC093541">
    <property type="protein sequence ID" value="AAH93541.1"/>
    <property type="molecule type" value="mRNA"/>
</dbReference>
<dbReference type="RefSeq" id="NP_001089368.1">
    <property type="nucleotide sequence ID" value="NM_001095899.1"/>
</dbReference>
<dbReference type="SMR" id="Q561L6"/>
<dbReference type="BioGRID" id="592199">
    <property type="interactions" value="1"/>
</dbReference>
<dbReference type="GeneID" id="734418"/>
<dbReference type="KEGG" id="xla:734418"/>
<dbReference type="AGR" id="Xenbase:XB-GENE-5845072"/>
<dbReference type="CTD" id="734418"/>
<dbReference type="Xenbase" id="XB-GENE-5845072">
    <property type="gene designation" value="amdhd1.L"/>
</dbReference>
<dbReference type="OrthoDB" id="194468at2759"/>
<dbReference type="UniPathway" id="UPA00379">
    <property type="reaction ID" value="UER00551"/>
</dbReference>
<dbReference type="Proteomes" id="UP000186698">
    <property type="component" value="Chromosome 3L"/>
</dbReference>
<dbReference type="Bgee" id="734418">
    <property type="expression patterns" value="Expressed in kidney and 10 other cell types or tissues"/>
</dbReference>
<dbReference type="GO" id="GO:0005737">
    <property type="term" value="C:cytoplasm"/>
    <property type="evidence" value="ECO:0007669"/>
    <property type="project" value="InterPro"/>
</dbReference>
<dbReference type="GO" id="GO:0050480">
    <property type="term" value="F:imidazolonepropionase activity"/>
    <property type="evidence" value="ECO:0000318"/>
    <property type="project" value="GO_Central"/>
</dbReference>
<dbReference type="GO" id="GO:0046872">
    <property type="term" value="F:metal ion binding"/>
    <property type="evidence" value="ECO:0007669"/>
    <property type="project" value="UniProtKB-KW"/>
</dbReference>
<dbReference type="GO" id="GO:0006548">
    <property type="term" value="P:L-histidine catabolic process"/>
    <property type="evidence" value="ECO:0000318"/>
    <property type="project" value="GO_Central"/>
</dbReference>
<dbReference type="GO" id="GO:0019556">
    <property type="term" value="P:L-histidine catabolic process to glutamate and formamide"/>
    <property type="evidence" value="ECO:0007669"/>
    <property type="project" value="UniProtKB-UniPathway"/>
</dbReference>
<dbReference type="GO" id="GO:0019557">
    <property type="term" value="P:L-histidine catabolic process to glutamate and formate"/>
    <property type="evidence" value="ECO:0007669"/>
    <property type="project" value="UniProtKB-UniPathway"/>
</dbReference>
<dbReference type="CDD" id="cd01296">
    <property type="entry name" value="Imidazolone-5PH"/>
    <property type="match status" value="1"/>
</dbReference>
<dbReference type="FunFam" id="3.20.20.140:FF:000007">
    <property type="entry name" value="Imidazolonepropionase"/>
    <property type="match status" value="1"/>
</dbReference>
<dbReference type="Gene3D" id="3.20.20.140">
    <property type="entry name" value="Metal-dependent hydrolases"/>
    <property type="match status" value="1"/>
</dbReference>
<dbReference type="Gene3D" id="2.30.40.10">
    <property type="entry name" value="Urease, subunit C, domain 1"/>
    <property type="match status" value="1"/>
</dbReference>
<dbReference type="InterPro" id="IPR006680">
    <property type="entry name" value="Amidohydro-rel"/>
</dbReference>
<dbReference type="InterPro" id="IPR005920">
    <property type="entry name" value="HutI"/>
</dbReference>
<dbReference type="InterPro" id="IPR011059">
    <property type="entry name" value="Metal-dep_hydrolase_composite"/>
</dbReference>
<dbReference type="InterPro" id="IPR032466">
    <property type="entry name" value="Metal_Hydrolase"/>
</dbReference>
<dbReference type="NCBIfam" id="TIGR01224">
    <property type="entry name" value="hutI"/>
    <property type="match status" value="1"/>
</dbReference>
<dbReference type="PANTHER" id="PTHR42752">
    <property type="entry name" value="IMIDAZOLONEPROPIONASE"/>
    <property type="match status" value="1"/>
</dbReference>
<dbReference type="PANTHER" id="PTHR42752:SF1">
    <property type="entry name" value="IMIDAZOLONEPROPIONASE-RELATED"/>
    <property type="match status" value="1"/>
</dbReference>
<dbReference type="Pfam" id="PF01979">
    <property type="entry name" value="Amidohydro_1"/>
    <property type="match status" value="1"/>
</dbReference>
<dbReference type="SUPFAM" id="SSF51338">
    <property type="entry name" value="Composite domain of metallo-dependent hydrolases"/>
    <property type="match status" value="1"/>
</dbReference>
<dbReference type="SUPFAM" id="SSF51556">
    <property type="entry name" value="Metallo-dependent hydrolases"/>
    <property type="match status" value="1"/>
</dbReference>
<proteinExistence type="evidence at transcript level"/>
<comment type="catalytic activity">
    <reaction>
        <text>4-imidazolone-5-propanoate + H2O = N-formimidoyl-L-glutamate</text>
        <dbReference type="Rhea" id="RHEA:23660"/>
        <dbReference type="ChEBI" id="CHEBI:15377"/>
        <dbReference type="ChEBI" id="CHEBI:58928"/>
        <dbReference type="ChEBI" id="CHEBI:77893"/>
        <dbReference type="EC" id="3.5.2.7"/>
    </reaction>
</comment>
<comment type="cofactor">
    <cofactor evidence="1">
        <name>Zn(2+)</name>
        <dbReference type="ChEBI" id="CHEBI:29105"/>
    </cofactor>
    <cofactor evidence="1">
        <name>Fe(3+)</name>
        <dbReference type="ChEBI" id="CHEBI:29034"/>
    </cofactor>
    <text evidence="1">Binds 1 zinc or iron ion per subunit.</text>
</comment>
<comment type="pathway">
    <text>Amino-acid degradation; L-histidine degradation into L-glutamate; N-formimidoyl-L-glutamate from L-histidine: step 3/3.</text>
</comment>
<comment type="similarity">
    <text evidence="5">Belongs to the metallo-dependent hydrolases superfamily. HutI family.</text>
</comment>
<name>HUTI_XENLA</name>
<accession>Q561L6</accession>
<evidence type="ECO:0000250" key="1"/>
<evidence type="ECO:0000250" key="2">
    <source>
        <dbReference type="UniProtKB" id="A0KF84"/>
    </source>
</evidence>
<evidence type="ECO:0000250" key="3">
    <source>
        <dbReference type="UniProtKB" id="P42084"/>
    </source>
</evidence>
<evidence type="ECO:0000250" key="4">
    <source>
        <dbReference type="UniProtKB" id="Q8U8Z6"/>
    </source>
</evidence>
<evidence type="ECO:0000305" key="5"/>
<gene>
    <name type="primary">amdhd1</name>
</gene>
<reference key="1">
    <citation type="submission" date="2005-04" db="EMBL/GenBank/DDBJ databases">
        <authorList>
            <consortium name="NIH - Xenopus Gene Collection (XGC) project"/>
        </authorList>
    </citation>
    <scope>NUCLEOTIDE SEQUENCE [LARGE SCALE MRNA]</scope>
    <source>
        <tissue>Embryo</tissue>
    </source>
</reference>
<sequence>MASKFRLLLENAEQIVVVCTKEEQYLLEDGMQHLAVLEKSSLVIGNDGCIKAVGPAETIRNHFSNASFENIIDCSGKCILPGFVDAHIHPVWAGDRVHEFAMKLAGATYMDIHQAGGGINYTVEHTTAASVEELFCSFKHRLERMLRAGTTLVECKSGYGLKLETELKMLRVIERAHRELDIAVSSTYCGAHSVPKGKSAQEAADDIINNHLPALKQMSLNGEIHVDNIDVFCEKGVFDLESTGRILQAGKAIGLNLNFHGDELNPMNSAELGAELGAHAVSHLEEVSDKGIAALAKAKCSAVLLPTTAYILRLKQPRARDMLKAGVIVSLGSDFNPNAYCFSMPMVMHLACVNMKMSLKEALAAATINAAYALGRAHTHGSLEVGKQGDVVVINASRWEHVIYQFGGHQELIECVVIKGKIVYKNEKFSICRMDLLK</sequence>